<gene>
    <name evidence="4" type="primary">Pycr3</name>
    <name type="synonym">Pycrl</name>
</gene>
<evidence type="ECO:0000250" key="1">
    <source>
        <dbReference type="UniProtKB" id="P32322"/>
    </source>
</evidence>
<evidence type="ECO:0000250" key="2">
    <source>
        <dbReference type="UniProtKB" id="Q53H96"/>
    </source>
</evidence>
<evidence type="ECO:0000305" key="3"/>
<evidence type="ECO:0000312" key="4">
    <source>
        <dbReference type="RGD" id="1309115"/>
    </source>
</evidence>
<accession>Q5PQJ6</accession>
<protein>
    <recommendedName>
        <fullName evidence="4">Pyrroline-5-carboxylate reductase 3</fullName>
        <shortName>P5C reductase 3</shortName>
        <shortName>P5CR 3</shortName>
        <ecNumber evidence="2">1.5.1.2</ecNumber>
    </recommendedName>
    <alternativeName>
        <fullName>Pyrroline-5-carboxylate reductase-like protein</fullName>
    </alternativeName>
</protein>
<keyword id="KW-0007">Acetylation</keyword>
<keyword id="KW-0028">Amino-acid biosynthesis</keyword>
<keyword id="KW-0963">Cytoplasm</keyword>
<keyword id="KW-0521">NADP</keyword>
<keyword id="KW-0560">Oxidoreductase</keyword>
<keyword id="KW-0641">Proline biosynthesis</keyword>
<keyword id="KW-1185">Reference proteome</keyword>
<organism>
    <name type="scientific">Rattus norvegicus</name>
    <name type="common">Rat</name>
    <dbReference type="NCBI Taxonomy" id="10116"/>
    <lineage>
        <taxon>Eukaryota</taxon>
        <taxon>Metazoa</taxon>
        <taxon>Chordata</taxon>
        <taxon>Craniata</taxon>
        <taxon>Vertebrata</taxon>
        <taxon>Euteleostomi</taxon>
        <taxon>Mammalia</taxon>
        <taxon>Eutheria</taxon>
        <taxon>Euarchontoglires</taxon>
        <taxon>Glires</taxon>
        <taxon>Rodentia</taxon>
        <taxon>Myomorpha</taxon>
        <taxon>Muroidea</taxon>
        <taxon>Muridae</taxon>
        <taxon>Murinae</taxon>
        <taxon>Rattus</taxon>
    </lineage>
</organism>
<sequence>MADEMSEPRRVGFVGAGRMAEAIAQGLIRAGKVEAKQVLASAPTDKNLCHFRALGCQTTHSNHEVLQNCPLVIFATKPQVLPAVLAEVAPVVTTEHIIVSVAAGISLSSMEELLPPKTRVLRVSPNLPCVVQEGAMVMTRGHHAGNEDAKLLQNLLEACGQCIEVPESYVDIHTGLSGSGVAFVCTFSEALAEGAIKMGMPSDLAHRIAAQTLLGTAKMLQQEGKHPAQLRTDVLTPAGTTIHGLHALEQGGFRAAAMSAVEAATCRAKELSKK</sequence>
<dbReference type="EC" id="1.5.1.2" evidence="2"/>
<dbReference type="EMBL" id="BC087166">
    <property type="protein sequence ID" value="AAH87166.1"/>
    <property type="molecule type" value="mRNA"/>
</dbReference>
<dbReference type="RefSeq" id="NP_001011993.1">
    <property type="nucleotide sequence ID" value="NM_001011993.1"/>
</dbReference>
<dbReference type="SMR" id="Q5PQJ6"/>
<dbReference type="FunCoup" id="Q5PQJ6">
    <property type="interactions" value="564"/>
</dbReference>
<dbReference type="STRING" id="10116.ENSRNOP00000071183"/>
<dbReference type="PhosphoSitePlus" id="Q5PQJ6"/>
<dbReference type="jPOST" id="Q5PQJ6"/>
<dbReference type="PaxDb" id="10116-ENSRNOP00000053357"/>
<dbReference type="GeneID" id="300035"/>
<dbReference type="KEGG" id="rno:300035"/>
<dbReference type="UCSC" id="RGD:1309115">
    <property type="organism name" value="rat"/>
</dbReference>
<dbReference type="AGR" id="RGD:1309115"/>
<dbReference type="CTD" id="65263"/>
<dbReference type="RGD" id="1309115">
    <property type="gene designation" value="Pycr3"/>
</dbReference>
<dbReference type="VEuPathDB" id="HostDB:ENSRNOG00000021638"/>
<dbReference type="eggNOG" id="KOG3124">
    <property type="taxonomic scope" value="Eukaryota"/>
</dbReference>
<dbReference type="HOGENOM" id="CLU_042344_3_1_1"/>
<dbReference type="InParanoid" id="Q5PQJ6"/>
<dbReference type="PhylomeDB" id="Q5PQJ6"/>
<dbReference type="Reactome" id="R-RNO-8964539">
    <property type="pathway name" value="Glutamate and glutamine metabolism"/>
</dbReference>
<dbReference type="SABIO-RK" id="Q5PQJ6"/>
<dbReference type="UniPathway" id="UPA00098">
    <property type="reaction ID" value="UER00361"/>
</dbReference>
<dbReference type="PRO" id="PR:Q5PQJ6"/>
<dbReference type="Proteomes" id="UP000002494">
    <property type="component" value="Chromosome 7"/>
</dbReference>
<dbReference type="Bgee" id="ENSRNOG00000054724">
    <property type="expression patterns" value="Expressed in duodenum and 19 other cell types or tissues"/>
</dbReference>
<dbReference type="GO" id="GO:0005829">
    <property type="term" value="C:cytosol"/>
    <property type="evidence" value="ECO:0000250"/>
    <property type="project" value="UniProtKB"/>
</dbReference>
<dbReference type="GO" id="GO:0004735">
    <property type="term" value="F:pyrroline-5-carboxylate reductase activity"/>
    <property type="evidence" value="ECO:0000250"/>
    <property type="project" value="UniProtKB"/>
</dbReference>
<dbReference type="GO" id="GO:0055129">
    <property type="term" value="P:L-proline biosynthetic process"/>
    <property type="evidence" value="ECO:0000250"/>
    <property type="project" value="UniProtKB"/>
</dbReference>
<dbReference type="FunFam" id="3.40.50.720:FF:000367">
    <property type="entry name" value="Pyrroline-5-carboxylate reductase"/>
    <property type="match status" value="1"/>
</dbReference>
<dbReference type="FunFam" id="1.10.3730.10:FF:000003">
    <property type="entry name" value="Pyrroline-5-carboxylate reductase 1, mitochondrial"/>
    <property type="match status" value="1"/>
</dbReference>
<dbReference type="Gene3D" id="3.40.50.720">
    <property type="entry name" value="NAD(P)-binding Rossmann-like Domain"/>
    <property type="match status" value="1"/>
</dbReference>
<dbReference type="Gene3D" id="1.10.3730.10">
    <property type="entry name" value="ProC C-terminal domain-like"/>
    <property type="match status" value="1"/>
</dbReference>
<dbReference type="HAMAP" id="MF_01925">
    <property type="entry name" value="P5C_reductase"/>
    <property type="match status" value="1"/>
</dbReference>
<dbReference type="InterPro" id="IPR008927">
    <property type="entry name" value="6-PGluconate_DH-like_C_sf"/>
</dbReference>
<dbReference type="InterPro" id="IPR036291">
    <property type="entry name" value="NAD(P)-bd_dom_sf"/>
</dbReference>
<dbReference type="InterPro" id="IPR028939">
    <property type="entry name" value="P5C_Rdtase_cat_N"/>
</dbReference>
<dbReference type="InterPro" id="IPR029036">
    <property type="entry name" value="P5CR_dimer"/>
</dbReference>
<dbReference type="InterPro" id="IPR000304">
    <property type="entry name" value="Pyrroline-COOH_reductase"/>
</dbReference>
<dbReference type="NCBIfam" id="TIGR00112">
    <property type="entry name" value="proC"/>
    <property type="match status" value="1"/>
</dbReference>
<dbReference type="PANTHER" id="PTHR11645">
    <property type="entry name" value="PYRROLINE-5-CARBOXYLATE REDUCTASE"/>
    <property type="match status" value="1"/>
</dbReference>
<dbReference type="PANTHER" id="PTHR11645:SF0">
    <property type="entry name" value="PYRROLINE-5-CARBOXYLATE REDUCTASE 3"/>
    <property type="match status" value="1"/>
</dbReference>
<dbReference type="Pfam" id="PF03807">
    <property type="entry name" value="F420_oxidored"/>
    <property type="match status" value="1"/>
</dbReference>
<dbReference type="Pfam" id="PF14748">
    <property type="entry name" value="P5CR_dimer"/>
    <property type="match status" value="1"/>
</dbReference>
<dbReference type="PIRSF" id="PIRSF000193">
    <property type="entry name" value="Pyrrol-5-carb_rd"/>
    <property type="match status" value="1"/>
</dbReference>
<dbReference type="SUPFAM" id="SSF48179">
    <property type="entry name" value="6-phosphogluconate dehydrogenase C-terminal domain-like"/>
    <property type="match status" value="1"/>
</dbReference>
<dbReference type="SUPFAM" id="SSF51735">
    <property type="entry name" value="NAD(P)-binding Rossmann-fold domains"/>
    <property type="match status" value="1"/>
</dbReference>
<name>P5CR3_RAT</name>
<feature type="initiator methionine" description="Removed" evidence="2">
    <location>
        <position position="1"/>
    </location>
</feature>
<feature type="chain" id="PRO_0000324564" description="Pyrroline-5-carboxylate reductase 3">
    <location>
        <begin position="2"/>
        <end position="274"/>
    </location>
</feature>
<feature type="modified residue" description="N-acetylalanine" evidence="2">
    <location>
        <position position="2"/>
    </location>
</feature>
<proteinExistence type="evidence at transcript level"/>
<reference key="1">
    <citation type="journal article" date="2004" name="Genome Res.">
        <title>The status, quality, and expansion of the NIH full-length cDNA project: the Mammalian Gene Collection (MGC).</title>
        <authorList>
            <consortium name="The MGC Project Team"/>
        </authorList>
    </citation>
    <scope>NUCLEOTIDE SEQUENCE [LARGE SCALE MRNA]</scope>
    <source>
        <tissue>Testis</tissue>
    </source>
</reference>
<comment type="function">
    <text evidence="2">Oxidoreductase that catalyzes the last step in proline biosynthesis, which corresponds to the reduction of pyrroline-5-carboxylate (P5C) to L-proline using NAD(P)H. Proline is synthesized from either glutamate or ornithine; both are converted to P5C, and then to proline via pyrroline-5-carboxylate reductases (PYCRs). PYCR3 is exclusively linked to the biosynthesis of proline from ornithine.</text>
</comment>
<comment type="catalytic activity">
    <reaction evidence="2">
        <text>L-proline + NADP(+) = (S)-1-pyrroline-5-carboxylate + NADPH + 2 H(+)</text>
        <dbReference type="Rhea" id="RHEA:14109"/>
        <dbReference type="ChEBI" id="CHEBI:15378"/>
        <dbReference type="ChEBI" id="CHEBI:17388"/>
        <dbReference type="ChEBI" id="CHEBI:57783"/>
        <dbReference type="ChEBI" id="CHEBI:58349"/>
        <dbReference type="ChEBI" id="CHEBI:60039"/>
        <dbReference type="EC" id="1.5.1.2"/>
    </reaction>
    <physiologicalReaction direction="right-to-left" evidence="2">
        <dbReference type="Rhea" id="RHEA:14111"/>
    </physiologicalReaction>
</comment>
<comment type="catalytic activity">
    <reaction evidence="2">
        <text>L-proline + NAD(+) = (S)-1-pyrroline-5-carboxylate + NADH + 2 H(+)</text>
        <dbReference type="Rhea" id="RHEA:14105"/>
        <dbReference type="ChEBI" id="CHEBI:15378"/>
        <dbReference type="ChEBI" id="CHEBI:17388"/>
        <dbReference type="ChEBI" id="CHEBI:57540"/>
        <dbReference type="ChEBI" id="CHEBI:57945"/>
        <dbReference type="ChEBI" id="CHEBI:60039"/>
        <dbReference type="EC" id="1.5.1.2"/>
    </reaction>
    <physiologicalReaction direction="right-to-left" evidence="2">
        <dbReference type="Rhea" id="RHEA:14107"/>
    </physiologicalReaction>
</comment>
<comment type="pathway">
    <text evidence="2">Amino-acid biosynthesis; L-proline biosynthesis; L-proline from L-glutamate 5-semialdehyde: step 1/1.</text>
</comment>
<comment type="subunit">
    <text evidence="1">Homodecamer; composed of 5 homodimers.</text>
</comment>
<comment type="subcellular location">
    <subcellularLocation>
        <location evidence="2">Cytoplasm</location>
    </subcellularLocation>
</comment>
<comment type="similarity">
    <text evidence="3">Belongs to the pyrroline-5-carboxylate reductase family.</text>
</comment>